<proteinExistence type="inferred from homology"/>
<gene>
    <name evidence="1" type="primary">hslV</name>
    <name type="ordered locus">SACOL1270</name>
</gene>
<keyword id="KW-0021">Allosteric enzyme</keyword>
<keyword id="KW-0963">Cytoplasm</keyword>
<keyword id="KW-0378">Hydrolase</keyword>
<keyword id="KW-0479">Metal-binding</keyword>
<keyword id="KW-0645">Protease</keyword>
<keyword id="KW-0915">Sodium</keyword>
<keyword id="KW-0888">Threonine protease</keyword>
<sequence length="181" mass="19572">MSNTTLHATTIYAVRHNGKAAMAGDGQVTLGQQVIMKQTARKVRRLYEGKVLAGFAGSVADAFTLFEKFETKLQQFSGNLERAAVELAQEWRGDKQLRQLEAMLIVMDKDAILVVSGTGEVIAPDDDLIAIGSGGNYALSAGRALKRHASHLSAEEMAYESLKVAADICVFTNDNIVVETL</sequence>
<feature type="chain" id="PRO_0000148146" description="ATP-dependent protease subunit HslV">
    <location>
        <begin position="1"/>
        <end position="181"/>
    </location>
</feature>
<feature type="active site" evidence="1">
    <location>
        <position position="9"/>
    </location>
</feature>
<feature type="binding site" evidence="1">
    <location>
        <position position="166"/>
    </location>
    <ligand>
        <name>Na(+)</name>
        <dbReference type="ChEBI" id="CHEBI:29101"/>
    </ligand>
</feature>
<feature type="binding site" evidence="1">
    <location>
        <position position="169"/>
    </location>
    <ligand>
        <name>Na(+)</name>
        <dbReference type="ChEBI" id="CHEBI:29101"/>
    </ligand>
</feature>
<feature type="binding site" evidence="1">
    <location>
        <position position="172"/>
    </location>
    <ligand>
        <name>Na(+)</name>
        <dbReference type="ChEBI" id="CHEBI:29101"/>
    </ligand>
</feature>
<protein>
    <recommendedName>
        <fullName evidence="1">ATP-dependent protease subunit HslV</fullName>
        <ecNumber evidence="1">3.4.25.2</ecNumber>
    </recommendedName>
</protein>
<comment type="function">
    <text evidence="1">Protease subunit of a proteasome-like degradation complex believed to be a general protein degrading machinery.</text>
</comment>
<comment type="catalytic activity">
    <reaction evidence="1">
        <text>ATP-dependent cleavage of peptide bonds with broad specificity.</text>
        <dbReference type="EC" id="3.4.25.2"/>
    </reaction>
</comment>
<comment type="activity regulation">
    <text evidence="1">Allosterically activated by HslU binding.</text>
</comment>
<comment type="subunit">
    <text evidence="1">A double ring-shaped homohexamer of HslV is capped on each side by a ring-shaped HslU homohexamer. The assembly of the HslU/HslV complex is dependent on binding of ATP.</text>
</comment>
<comment type="subcellular location">
    <subcellularLocation>
        <location evidence="1">Cytoplasm</location>
    </subcellularLocation>
</comment>
<comment type="similarity">
    <text evidence="1">Belongs to the peptidase T1B family. HslV subfamily.</text>
</comment>
<dbReference type="EC" id="3.4.25.2" evidence="1"/>
<dbReference type="EMBL" id="CP000046">
    <property type="protein sequence ID" value="AAW38102.1"/>
    <property type="molecule type" value="Genomic_DNA"/>
</dbReference>
<dbReference type="RefSeq" id="WP_000072681.1">
    <property type="nucleotide sequence ID" value="NZ_JBGOFO010000002.1"/>
</dbReference>
<dbReference type="SMR" id="Q5HGH9"/>
<dbReference type="MEROPS" id="T01.007"/>
<dbReference type="KEGG" id="sac:SACOL1270"/>
<dbReference type="HOGENOM" id="CLU_093872_1_1_9"/>
<dbReference type="Proteomes" id="UP000000530">
    <property type="component" value="Chromosome"/>
</dbReference>
<dbReference type="GO" id="GO:0009376">
    <property type="term" value="C:HslUV protease complex"/>
    <property type="evidence" value="ECO:0007669"/>
    <property type="project" value="UniProtKB-UniRule"/>
</dbReference>
<dbReference type="GO" id="GO:0005839">
    <property type="term" value="C:proteasome core complex"/>
    <property type="evidence" value="ECO:0007669"/>
    <property type="project" value="InterPro"/>
</dbReference>
<dbReference type="GO" id="GO:0046872">
    <property type="term" value="F:metal ion binding"/>
    <property type="evidence" value="ECO:0007669"/>
    <property type="project" value="UniProtKB-KW"/>
</dbReference>
<dbReference type="GO" id="GO:0004298">
    <property type="term" value="F:threonine-type endopeptidase activity"/>
    <property type="evidence" value="ECO:0007669"/>
    <property type="project" value="UniProtKB-KW"/>
</dbReference>
<dbReference type="GO" id="GO:0051603">
    <property type="term" value="P:proteolysis involved in protein catabolic process"/>
    <property type="evidence" value="ECO:0007669"/>
    <property type="project" value="InterPro"/>
</dbReference>
<dbReference type="CDD" id="cd01913">
    <property type="entry name" value="protease_HslV"/>
    <property type="match status" value="1"/>
</dbReference>
<dbReference type="Gene3D" id="3.60.20.10">
    <property type="entry name" value="Glutamine Phosphoribosylpyrophosphate, subunit 1, domain 1"/>
    <property type="match status" value="1"/>
</dbReference>
<dbReference type="HAMAP" id="MF_00248">
    <property type="entry name" value="HslV"/>
    <property type="match status" value="1"/>
</dbReference>
<dbReference type="InterPro" id="IPR022281">
    <property type="entry name" value="ATP-dep_Prtase_HsIV_su"/>
</dbReference>
<dbReference type="InterPro" id="IPR029055">
    <property type="entry name" value="Ntn_hydrolases_N"/>
</dbReference>
<dbReference type="InterPro" id="IPR001353">
    <property type="entry name" value="Proteasome_sua/b"/>
</dbReference>
<dbReference type="InterPro" id="IPR023333">
    <property type="entry name" value="Proteasome_suB-type"/>
</dbReference>
<dbReference type="NCBIfam" id="TIGR03692">
    <property type="entry name" value="ATP_dep_HslV"/>
    <property type="match status" value="1"/>
</dbReference>
<dbReference type="NCBIfam" id="NF003964">
    <property type="entry name" value="PRK05456.1"/>
    <property type="match status" value="1"/>
</dbReference>
<dbReference type="PANTHER" id="PTHR32194:SF0">
    <property type="entry name" value="ATP-DEPENDENT PROTEASE SUBUNIT HSLV"/>
    <property type="match status" value="1"/>
</dbReference>
<dbReference type="PANTHER" id="PTHR32194">
    <property type="entry name" value="METALLOPROTEASE TLDD"/>
    <property type="match status" value="1"/>
</dbReference>
<dbReference type="Pfam" id="PF00227">
    <property type="entry name" value="Proteasome"/>
    <property type="match status" value="1"/>
</dbReference>
<dbReference type="PIRSF" id="PIRSF039093">
    <property type="entry name" value="HslV"/>
    <property type="match status" value="1"/>
</dbReference>
<dbReference type="SUPFAM" id="SSF56235">
    <property type="entry name" value="N-terminal nucleophile aminohydrolases (Ntn hydrolases)"/>
    <property type="match status" value="1"/>
</dbReference>
<dbReference type="PROSITE" id="PS51476">
    <property type="entry name" value="PROTEASOME_BETA_2"/>
    <property type="match status" value="1"/>
</dbReference>
<reference key="1">
    <citation type="journal article" date="2005" name="J. Bacteriol.">
        <title>Insights on evolution of virulence and resistance from the complete genome analysis of an early methicillin-resistant Staphylococcus aureus strain and a biofilm-producing methicillin-resistant Staphylococcus epidermidis strain.</title>
        <authorList>
            <person name="Gill S.R."/>
            <person name="Fouts D.E."/>
            <person name="Archer G.L."/>
            <person name="Mongodin E.F."/>
            <person name="DeBoy R.T."/>
            <person name="Ravel J."/>
            <person name="Paulsen I.T."/>
            <person name="Kolonay J.F."/>
            <person name="Brinkac L.M."/>
            <person name="Beanan M.J."/>
            <person name="Dodson R.J."/>
            <person name="Daugherty S.C."/>
            <person name="Madupu R."/>
            <person name="Angiuoli S.V."/>
            <person name="Durkin A.S."/>
            <person name="Haft D.H."/>
            <person name="Vamathevan J.J."/>
            <person name="Khouri H."/>
            <person name="Utterback T.R."/>
            <person name="Lee C."/>
            <person name="Dimitrov G."/>
            <person name="Jiang L."/>
            <person name="Qin H."/>
            <person name="Weidman J."/>
            <person name="Tran K."/>
            <person name="Kang K.H."/>
            <person name="Hance I.R."/>
            <person name="Nelson K.E."/>
            <person name="Fraser C.M."/>
        </authorList>
    </citation>
    <scope>NUCLEOTIDE SEQUENCE [LARGE SCALE GENOMIC DNA]</scope>
    <source>
        <strain>COL</strain>
    </source>
</reference>
<evidence type="ECO:0000255" key="1">
    <source>
        <dbReference type="HAMAP-Rule" id="MF_00248"/>
    </source>
</evidence>
<name>HSLV_STAAC</name>
<accession>Q5HGH9</accession>
<organism>
    <name type="scientific">Staphylococcus aureus (strain COL)</name>
    <dbReference type="NCBI Taxonomy" id="93062"/>
    <lineage>
        <taxon>Bacteria</taxon>
        <taxon>Bacillati</taxon>
        <taxon>Bacillota</taxon>
        <taxon>Bacilli</taxon>
        <taxon>Bacillales</taxon>
        <taxon>Staphylococcaceae</taxon>
        <taxon>Staphylococcus</taxon>
    </lineage>
</organism>